<gene>
    <name evidence="7" type="primary">ILL2</name>
    <name evidence="10" type="ordered locus">At5g56660</name>
    <name evidence="11" type="ORF">MIK19.11</name>
</gene>
<keyword id="KW-0002">3D-structure</keyword>
<keyword id="KW-0256">Endoplasmic reticulum</keyword>
<keyword id="KW-0378">Hydrolase</keyword>
<keyword id="KW-0464">Manganese</keyword>
<keyword id="KW-0479">Metal-binding</keyword>
<keyword id="KW-1185">Reference proteome</keyword>
<keyword id="KW-0732">Signal</keyword>
<name>ILL2_ARATH</name>
<sequence>MALNKLLSLTFQLLLFLLSVSSESPWIAEDTSQIQTKLLEFAKSPEVFDWMVKIRRKIHENPELGYEELETSKLIRSELELIGIKYRYPVAITGVIGYIGTGEPPFVALRADMDALPIQEGVEWEHKSKIAGKMHACGHDGHVTMLLGAAKILHEHRHHLQGTVVLIFQPAEEGLSGAKKMREEGALKNVEAIFGIHLSARIPFGKAASRAGSFLAGAGVFEAVITGKGGHAAIPQHTIDPVVAASSIVLSLQQLVSRETDPLDSKVVTVSKVNGGNAFNVIPDSITIGGTLRAFTGFTQLQQRVKEVITKQAAVHRCNASVNLTPNGREPMPPTVNNKDLYKQFKKVVRDLLGQEAFVEAAPVMGSEDFSYFAETIPGHFSLLGMQDETNGYASSHSPLYRINEDVLPYGAAIHASMAVQYLKEKASKGSVSGFHEEL</sequence>
<proteinExistence type="evidence at protein level"/>
<comment type="function">
    <text evidence="4 5">Hydrolyzes certain amino acid conjugates of the plant growth regulator indole-3-acetic acid (IAA), including IAA-Ala, IAA-Leu, IAA-Met, IAA-Phe, IAA-Ser, IAA-Thr, IAA-Tyr and IAA-Val (PubMed:11923288). Is the most efficient enzyme of the ILL family for IAA-Ala (PubMed:11923288). Not important for IAA-Leu hydrolysis in roots (PubMed:15155875). May act with ILR1 to provide free IAA to germinating seedlings (PubMed:15155875).</text>
</comment>
<comment type="cofactor">
    <cofactor evidence="4">
        <name>Mn(2+)</name>
        <dbReference type="ChEBI" id="CHEBI:29035"/>
    </cofactor>
    <text evidence="4">The Mn(2+) ion enhances activity.</text>
</comment>
<comment type="biophysicochemical properties">
    <kinetics>
        <KM evidence="4">52 uM for IAA-Ala</KM>
        <KM evidence="4">126 uM for IAA-Leu</KM>
        <Vmax evidence="4">1700.0 nmol/min/mg enzyme with IAA-Ala as substrate</Vmax>
        <Vmax evidence="4">220.0 nmol/min/mg enzyme with IAA-Leu as substrate</Vmax>
        <text evidence="4">kcat is 2.1 sec(-1) with IAA-Ala as substrate. kcat is 0.27 sec(-1) with IAA-Leu as substrate.</text>
    </kinetics>
    <phDependence>
        <text evidence="4">Optimum pH is 8.0.</text>
    </phDependence>
</comment>
<comment type="subunit">
    <text evidence="6">Monomer.</text>
</comment>
<comment type="subcellular location">
    <subcellularLocation>
        <location evidence="3">Endoplasmic reticulum lumen</location>
    </subcellularLocation>
</comment>
<comment type="tissue specificity">
    <text evidence="5">Expressed in leaves, stems, siliques, seeds and flowers. Detected in the distal tips of cotyledons and seedling leaves, hydathodes of leaves from mature plants, pollen, ovules and developing seeds.</text>
</comment>
<comment type="disruption phenotype">
    <text evidence="5">No effect on the sensitivity to the inhibition of root elongation caused by IAA-Leu or IAA-Ala.</text>
</comment>
<comment type="similarity">
    <text evidence="8">Belongs to the peptidase M20 family.</text>
</comment>
<protein>
    <recommendedName>
        <fullName evidence="7">IAA-amino acid hydrolase ILR1-like 2</fullName>
        <ecNumber evidence="8">3.5.1.-</ecNumber>
    </recommendedName>
</protein>
<dbReference type="EC" id="3.5.1.-" evidence="8"/>
<dbReference type="EMBL" id="U23796">
    <property type="protein sequence ID" value="AAC49016.1"/>
    <property type="molecule type" value="mRNA"/>
</dbReference>
<dbReference type="EMBL" id="AF047031">
    <property type="protein sequence ID" value="AAC04866.1"/>
    <property type="molecule type" value="Genomic_DNA"/>
</dbReference>
<dbReference type="EMBL" id="AB013392">
    <property type="protein sequence ID" value="BAB09884.1"/>
    <property type="molecule type" value="Genomic_DNA"/>
</dbReference>
<dbReference type="EMBL" id="CP002688">
    <property type="protein sequence ID" value="AED96793.1"/>
    <property type="molecule type" value="Genomic_DNA"/>
</dbReference>
<dbReference type="EMBL" id="AY072084">
    <property type="protein sequence ID" value="AAL59907.1"/>
    <property type="molecule type" value="mRNA"/>
</dbReference>
<dbReference type="RefSeq" id="NP_200477.1">
    <property type="nucleotide sequence ID" value="NM_125049.3"/>
</dbReference>
<dbReference type="PDB" id="1XMB">
    <property type="method" value="X-ray"/>
    <property type="resolution" value="2.00 A"/>
    <property type="chains" value="A=22-439"/>
</dbReference>
<dbReference type="PDB" id="2Q43">
    <property type="method" value="X-ray"/>
    <property type="resolution" value="2.00 A"/>
    <property type="chains" value="A=22-439"/>
</dbReference>
<dbReference type="PDBsum" id="1XMB"/>
<dbReference type="PDBsum" id="2Q43"/>
<dbReference type="SMR" id="P54970"/>
<dbReference type="FunCoup" id="P54970">
    <property type="interactions" value="530"/>
</dbReference>
<dbReference type="STRING" id="3702.P54970"/>
<dbReference type="MEROPS" id="M20.014"/>
<dbReference type="PaxDb" id="3702-AT5G56660.1"/>
<dbReference type="ProteomicsDB" id="228838"/>
<dbReference type="EnsemblPlants" id="AT5G56660.1">
    <property type="protein sequence ID" value="AT5G56660.1"/>
    <property type="gene ID" value="AT5G56660"/>
</dbReference>
<dbReference type="GeneID" id="835767"/>
<dbReference type="Gramene" id="AT5G56660.1">
    <property type="protein sequence ID" value="AT5G56660.1"/>
    <property type="gene ID" value="AT5G56660"/>
</dbReference>
<dbReference type="KEGG" id="ath:AT5G56660"/>
<dbReference type="Araport" id="AT5G56660"/>
<dbReference type="TAIR" id="AT5G56660">
    <property type="gene designation" value="ILL2"/>
</dbReference>
<dbReference type="eggNOG" id="ENOG502QQEM">
    <property type="taxonomic scope" value="Eukaryota"/>
</dbReference>
<dbReference type="HOGENOM" id="CLU_023257_0_0_1"/>
<dbReference type="InParanoid" id="P54970"/>
<dbReference type="OMA" id="INNFWIF"/>
<dbReference type="PhylomeDB" id="P54970"/>
<dbReference type="BioCyc" id="ARA:MONOMER-4142"/>
<dbReference type="BioCyc" id="MetaCyc:MONOMER-4142"/>
<dbReference type="EvolutionaryTrace" id="P54970"/>
<dbReference type="PRO" id="PR:P54970"/>
<dbReference type="Proteomes" id="UP000006548">
    <property type="component" value="Chromosome 5"/>
</dbReference>
<dbReference type="ExpressionAtlas" id="P54970">
    <property type="expression patterns" value="baseline and differential"/>
</dbReference>
<dbReference type="GO" id="GO:0005783">
    <property type="term" value="C:endoplasmic reticulum"/>
    <property type="evidence" value="ECO:0007005"/>
    <property type="project" value="TAIR"/>
</dbReference>
<dbReference type="GO" id="GO:0005788">
    <property type="term" value="C:endoplasmic reticulum lumen"/>
    <property type="evidence" value="ECO:0007669"/>
    <property type="project" value="UniProtKB-SubCell"/>
</dbReference>
<dbReference type="GO" id="GO:0010179">
    <property type="term" value="F:IAA-Ala conjugate hydrolase activity"/>
    <property type="evidence" value="ECO:0000314"/>
    <property type="project" value="TAIR"/>
</dbReference>
<dbReference type="GO" id="GO:0010178">
    <property type="term" value="F:IAA-amino acid conjugate hydrolase activity"/>
    <property type="evidence" value="ECO:0000314"/>
    <property type="project" value="TAIR"/>
</dbReference>
<dbReference type="GO" id="GO:0046872">
    <property type="term" value="F:metal ion binding"/>
    <property type="evidence" value="ECO:0007669"/>
    <property type="project" value="UniProtKB-KW"/>
</dbReference>
<dbReference type="GO" id="GO:0009850">
    <property type="term" value="P:auxin metabolic process"/>
    <property type="evidence" value="ECO:0000314"/>
    <property type="project" value="TAIR"/>
</dbReference>
<dbReference type="CDD" id="cd08017">
    <property type="entry name" value="M20_IAA_Hyd"/>
    <property type="match status" value="1"/>
</dbReference>
<dbReference type="FunFam" id="3.30.70.360:FF:000001">
    <property type="entry name" value="N-acetyldiaminopimelate deacetylase"/>
    <property type="match status" value="1"/>
</dbReference>
<dbReference type="Gene3D" id="3.30.70.360">
    <property type="match status" value="1"/>
</dbReference>
<dbReference type="Gene3D" id="3.40.630.10">
    <property type="entry name" value="Zn peptidases"/>
    <property type="match status" value="1"/>
</dbReference>
<dbReference type="InterPro" id="IPR017439">
    <property type="entry name" value="Amidohydrolase"/>
</dbReference>
<dbReference type="InterPro" id="IPR036264">
    <property type="entry name" value="Bact_exopeptidase_dim_dom"/>
</dbReference>
<dbReference type="InterPro" id="IPR044757">
    <property type="entry name" value="ILR1-like_Hyd"/>
</dbReference>
<dbReference type="InterPro" id="IPR002933">
    <property type="entry name" value="Peptidase_M20"/>
</dbReference>
<dbReference type="InterPro" id="IPR011650">
    <property type="entry name" value="Peptidase_M20_dimer"/>
</dbReference>
<dbReference type="NCBIfam" id="TIGR01891">
    <property type="entry name" value="amidohydrolases"/>
    <property type="match status" value="1"/>
</dbReference>
<dbReference type="PANTHER" id="PTHR11014:SF158">
    <property type="entry name" value="IAA-AMINO ACID HYDROLASE ILR1-LIKE 1-RELATED"/>
    <property type="match status" value="1"/>
</dbReference>
<dbReference type="PANTHER" id="PTHR11014">
    <property type="entry name" value="PEPTIDASE M20 FAMILY MEMBER"/>
    <property type="match status" value="1"/>
</dbReference>
<dbReference type="Pfam" id="PF07687">
    <property type="entry name" value="M20_dimer"/>
    <property type="match status" value="1"/>
</dbReference>
<dbReference type="Pfam" id="PF01546">
    <property type="entry name" value="Peptidase_M20"/>
    <property type="match status" value="1"/>
</dbReference>
<dbReference type="PIRSF" id="PIRSF005962">
    <property type="entry name" value="Pept_M20D_amidohydro"/>
    <property type="match status" value="1"/>
</dbReference>
<dbReference type="SUPFAM" id="SSF55031">
    <property type="entry name" value="Bacterial exopeptidase dimerisation domain"/>
    <property type="match status" value="1"/>
</dbReference>
<dbReference type="SUPFAM" id="SSF53187">
    <property type="entry name" value="Zn-dependent exopeptidases"/>
    <property type="match status" value="1"/>
</dbReference>
<dbReference type="PROSITE" id="PS00014">
    <property type="entry name" value="ER_TARGET"/>
    <property type="match status" value="1"/>
</dbReference>
<organism>
    <name type="scientific">Arabidopsis thaliana</name>
    <name type="common">Mouse-ear cress</name>
    <dbReference type="NCBI Taxonomy" id="3702"/>
    <lineage>
        <taxon>Eukaryota</taxon>
        <taxon>Viridiplantae</taxon>
        <taxon>Streptophyta</taxon>
        <taxon>Embryophyta</taxon>
        <taxon>Tracheophyta</taxon>
        <taxon>Spermatophyta</taxon>
        <taxon>Magnoliopsida</taxon>
        <taxon>eudicotyledons</taxon>
        <taxon>Gunneridae</taxon>
        <taxon>Pentapetalae</taxon>
        <taxon>rosids</taxon>
        <taxon>malvids</taxon>
        <taxon>Brassicales</taxon>
        <taxon>Brassicaceae</taxon>
        <taxon>Camelineae</taxon>
        <taxon>Arabidopsis</taxon>
    </lineage>
</organism>
<evidence type="ECO:0000250" key="1">
    <source>
        <dbReference type="UniProtKB" id="P54955"/>
    </source>
</evidence>
<evidence type="ECO:0000255" key="2"/>
<evidence type="ECO:0000255" key="3">
    <source>
        <dbReference type="PROSITE-ProRule" id="PRU10138"/>
    </source>
</evidence>
<evidence type="ECO:0000269" key="4">
    <source>
    </source>
</evidence>
<evidence type="ECO:0000269" key="5">
    <source>
    </source>
</evidence>
<evidence type="ECO:0000269" key="6">
    <source>
    </source>
</evidence>
<evidence type="ECO:0000303" key="7">
    <source>
    </source>
</evidence>
<evidence type="ECO:0000305" key="8"/>
<evidence type="ECO:0000305" key="9">
    <source>
    </source>
</evidence>
<evidence type="ECO:0000312" key="10">
    <source>
        <dbReference type="Araport" id="AT5G56660"/>
    </source>
</evidence>
<evidence type="ECO:0000312" key="11">
    <source>
        <dbReference type="EMBL" id="BAB09884.1"/>
    </source>
</evidence>
<evidence type="ECO:0007829" key="12">
    <source>
        <dbReference type="PDB" id="1XMB"/>
    </source>
</evidence>
<evidence type="ECO:0007829" key="13">
    <source>
        <dbReference type="PDB" id="2Q43"/>
    </source>
</evidence>
<reference key="1">
    <citation type="journal article" date="1995" name="Science">
        <title>ILR1, an amidohydrolase that releases active indole-3-acetic acid from conjugates.</title>
        <authorList>
            <person name="Bartel B."/>
            <person name="Fink G.R."/>
        </authorList>
    </citation>
    <scope>NUCLEOTIDE SEQUENCE [MRNA]</scope>
    <source>
        <strain>cv. Landsberg erecta</strain>
    </source>
</reference>
<reference key="2">
    <citation type="journal article" date="1999" name="Plant Cell">
        <title>IAR3 encodes an auxin conjugate hydrolase from Arabidopsis.</title>
        <authorList>
            <person name="Davies R.T."/>
            <person name="Goetz D.H."/>
            <person name="Lasswell J.E."/>
            <person name="Anderson M.N."/>
            <person name="Bartel B."/>
        </authorList>
    </citation>
    <scope>NUCLEOTIDE SEQUENCE [GENOMIC DNA]</scope>
    <source>
        <strain>cv. Columbia</strain>
    </source>
</reference>
<reference key="3">
    <citation type="journal article" date="1998" name="DNA Res.">
        <title>Structural analysis of Arabidopsis thaliana chromosome 5. VI. Sequence features of the regions of 1,367,185 bp covered by 19 physically assigned P1 and TAC clones.</title>
        <authorList>
            <person name="Kotani H."/>
            <person name="Nakamura Y."/>
            <person name="Sato S."/>
            <person name="Asamizu E."/>
            <person name="Kaneko T."/>
            <person name="Miyajima N."/>
            <person name="Tabata S."/>
        </authorList>
    </citation>
    <scope>NUCLEOTIDE SEQUENCE [LARGE SCALE GENOMIC DNA]</scope>
    <source>
        <strain>cv. Columbia</strain>
    </source>
</reference>
<reference key="4">
    <citation type="journal article" date="2017" name="Plant J.">
        <title>Araport11: a complete reannotation of the Arabidopsis thaliana reference genome.</title>
        <authorList>
            <person name="Cheng C.Y."/>
            <person name="Krishnakumar V."/>
            <person name="Chan A.P."/>
            <person name="Thibaud-Nissen F."/>
            <person name="Schobel S."/>
            <person name="Town C.D."/>
        </authorList>
    </citation>
    <scope>GENOME REANNOTATION</scope>
    <source>
        <strain>cv. Columbia</strain>
    </source>
</reference>
<reference key="5">
    <citation type="journal article" date="2003" name="Science">
        <title>Empirical analysis of transcriptional activity in the Arabidopsis genome.</title>
        <authorList>
            <person name="Yamada K."/>
            <person name="Lim J."/>
            <person name="Dale J.M."/>
            <person name="Chen H."/>
            <person name="Shinn P."/>
            <person name="Palm C.J."/>
            <person name="Southwick A.M."/>
            <person name="Wu H.C."/>
            <person name="Kim C.J."/>
            <person name="Nguyen M."/>
            <person name="Pham P.K."/>
            <person name="Cheuk R.F."/>
            <person name="Karlin-Newmann G."/>
            <person name="Liu S.X."/>
            <person name="Lam B."/>
            <person name="Sakano H."/>
            <person name="Wu T."/>
            <person name="Yu G."/>
            <person name="Miranda M."/>
            <person name="Quach H.L."/>
            <person name="Tripp M."/>
            <person name="Chang C.H."/>
            <person name="Lee J.M."/>
            <person name="Toriumi M.J."/>
            <person name="Chan M.M."/>
            <person name="Tang C.C."/>
            <person name="Onodera C.S."/>
            <person name="Deng J.M."/>
            <person name="Akiyama K."/>
            <person name="Ansari Y."/>
            <person name="Arakawa T."/>
            <person name="Banh J."/>
            <person name="Banno F."/>
            <person name="Bowser L."/>
            <person name="Brooks S.Y."/>
            <person name="Carninci P."/>
            <person name="Chao Q."/>
            <person name="Choy N."/>
            <person name="Enju A."/>
            <person name="Goldsmith A.D."/>
            <person name="Gurjal M."/>
            <person name="Hansen N.F."/>
            <person name="Hayashizaki Y."/>
            <person name="Johnson-Hopson C."/>
            <person name="Hsuan V.W."/>
            <person name="Iida K."/>
            <person name="Karnes M."/>
            <person name="Khan S."/>
            <person name="Koesema E."/>
            <person name="Ishida J."/>
            <person name="Jiang P.X."/>
            <person name="Jones T."/>
            <person name="Kawai J."/>
            <person name="Kamiya A."/>
            <person name="Meyers C."/>
            <person name="Nakajima M."/>
            <person name="Narusaka M."/>
            <person name="Seki M."/>
            <person name="Sakurai T."/>
            <person name="Satou M."/>
            <person name="Tamse R."/>
            <person name="Vaysberg M."/>
            <person name="Wallender E.K."/>
            <person name="Wong C."/>
            <person name="Yamamura Y."/>
            <person name="Yuan S."/>
            <person name="Shinozaki K."/>
            <person name="Davis R.W."/>
            <person name="Theologis A."/>
            <person name="Ecker J.R."/>
        </authorList>
    </citation>
    <scope>NUCLEOTIDE SEQUENCE [LARGE SCALE MRNA]</scope>
    <source>
        <strain>cv. Columbia</strain>
    </source>
</reference>
<reference key="6">
    <citation type="journal article" date="2002" name="J. Biol. Chem.">
        <title>Characterization of a family of IAA-amino acid conjugate hydrolases from Arabidopsis.</title>
        <authorList>
            <person name="LeClere S."/>
            <person name="Tellez R."/>
            <person name="Rampey R.A."/>
            <person name="Matsuda S.P.T."/>
            <person name="Bartel B."/>
        </authorList>
    </citation>
    <scope>GENE FAMILY</scope>
    <scope>FUNCTION</scope>
    <scope>BIOPHYSICOCHEMICAL PROPERTIES</scope>
    <scope>COFACTOR</scope>
    <scope>SUBSTRATE SPECIFICITY</scope>
</reference>
<reference key="7">
    <citation type="journal article" date="2004" name="Plant Physiol.">
        <title>A family of auxin-conjugate hydrolases that contributes to free indole-3-acetic acid levels during Arabidopsis germination.</title>
        <authorList>
            <person name="Rampey R.A."/>
            <person name="LeClere S."/>
            <person name="Kowalczyk M."/>
            <person name="Ljung K."/>
            <person name="Sandberg G."/>
            <person name="Bartel B."/>
        </authorList>
    </citation>
    <scope>FUNCTION</scope>
    <scope>TISSUE SPECIFICITY</scope>
    <scope>DISRUPTION PHENOTYPE</scope>
</reference>
<reference key="8">
    <citation type="journal article" date="2007" name="Structure">
        <title>Ensemble refinement of protein crystal structures: validation and application.</title>
        <authorList>
            <person name="Levin E.J."/>
            <person name="Kondrashov D.A."/>
            <person name="Wesenberg G.E."/>
            <person name="Phillips G.N. Jr."/>
        </authorList>
    </citation>
    <scope>X-RAY CRYSTALLOGRAPHY (2.00 ANGSTROMS) OF 22-439</scope>
</reference>
<reference key="9">
    <citation type="journal article" date="2009" name="Proteins">
        <title>X-ray structure of ILL2, an auxin-conjugate amidohydrolase from Arabidopsis thaliana.</title>
        <authorList>
            <person name="Bitto E."/>
            <person name="Bingman C.A."/>
            <person name="Bittova L."/>
            <person name="Houston N.L."/>
            <person name="Boston R.S."/>
            <person name="Fox B.G."/>
            <person name="Phillips G.N. Jr."/>
        </authorList>
    </citation>
    <scope>X-RAY CRYSTALLOGRAPHY (2.00 ANGSTROMS) OF 22-439</scope>
    <scope>SUBUNIT</scope>
</reference>
<feature type="signal peptide" evidence="2">
    <location>
        <begin position="1"/>
        <end position="21"/>
    </location>
</feature>
<feature type="chain" id="PRO_0000001190" description="IAA-amino acid hydrolase ILR1-like 2">
    <location>
        <begin position="22"/>
        <end position="439"/>
    </location>
</feature>
<feature type="short sequence motif" description="Prevents secretion from ER" evidence="3">
    <location>
        <begin position="436"/>
        <end position="439"/>
    </location>
</feature>
<feature type="binding site" evidence="1 9">
    <location>
        <position position="137"/>
    </location>
    <ligand>
        <name>Mn(2+)</name>
        <dbReference type="ChEBI" id="CHEBI:29035"/>
        <label>1</label>
    </ligand>
</feature>
<feature type="binding site" evidence="1 9">
    <location>
        <position position="137"/>
    </location>
    <ligand>
        <name>Mn(2+)</name>
        <dbReference type="ChEBI" id="CHEBI:29035"/>
        <label>2</label>
    </ligand>
</feature>
<feature type="binding site" evidence="1 9">
    <location>
        <position position="139"/>
    </location>
    <ligand>
        <name>Mn(2+)</name>
        <dbReference type="ChEBI" id="CHEBI:29035"/>
        <label>2</label>
    </ligand>
</feature>
<feature type="binding site" evidence="1 9">
    <location>
        <position position="173"/>
    </location>
    <ligand>
        <name>Mn(2+)</name>
        <dbReference type="ChEBI" id="CHEBI:29035"/>
        <label>1</label>
    </ligand>
</feature>
<feature type="binding site" evidence="1 9">
    <location>
        <position position="197"/>
    </location>
    <ligand>
        <name>Mn(2+)</name>
        <dbReference type="ChEBI" id="CHEBI:29035"/>
        <label>2</label>
    </ligand>
</feature>
<feature type="binding site" evidence="1 9">
    <location>
        <position position="397"/>
    </location>
    <ligand>
        <name>Mn(2+)</name>
        <dbReference type="ChEBI" id="CHEBI:29035"/>
        <label>1</label>
    </ligand>
</feature>
<feature type="sequence conflict" description="In Ref. 1; AAC49016." evidence="8" ref="1">
    <original>A</original>
    <variation>P</variation>
    <location>
        <position position="131"/>
    </location>
</feature>
<feature type="sequence conflict" description="In Ref. 1; AAC49016." evidence="8" ref="1">
    <original>Q</original>
    <variation>H</variation>
    <location>
        <position position="236"/>
    </location>
</feature>
<feature type="sequence conflict" description="In Ref. 5; AAL59907." evidence="8" ref="5">
    <original>D</original>
    <variation>G</variation>
    <location>
        <position position="240"/>
    </location>
</feature>
<feature type="helix" evidence="12">
    <location>
        <begin position="38"/>
        <end position="43"/>
    </location>
</feature>
<feature type="helix" evidence="12">
    <location>
        <begin position="45"/>
        <end position="60"/>
    </location>
</feature>
<feature type="helix" evidence="12">
    <location>
        <begin position="69"/>
        <end position="82"/>
    </location>
</feature>
<feature type="strand" evidence="12">
    <location>
        <begin position="86"/>
        <end position="90"/>
    </location>
</feature>
<feature type="turn" evidence="12">
    <location>
        <begin position="91"/>
        <end position="93"/>
    </location>
</feature>
<feature type="strand" evidence="12">
    <location>
        <begin position="94"/>
        <end position="104"/>
    </location>
</feature>
<feature type="strand" evidence="12">
    <location>
        <begin position="106"/>
        <end position="112"/>
    </location>
</feature>
<feature type="helix" evidence="12">
    <location>
        <begin position="139"/>
        <end position="155"/>
    </location>
</feature>
<feature type="helix" evidence="12">
    <location>
        <begin position="157"/>
        <end position="159"/>
    </location>
</feature>
<feature type="strand" evidence="12">
    <location>
        <begin position="161"/>
        <end position="169"/>
    </location>
</feature>
<feature type="turn" evidence="12">
    <location>
        <begin position="172"/>
        <end position="175"/>
    </location>
</feature>
<feature type="helix" evidence="12">
    <location>
        <begin position="177"/>
        <end position="183"/>
    </location>
</feature>
<feature type="turn" evidence="12">
    <location>
        <begin position="184"/>
        <end position="189"/>
    </location>
</feature>
<feature type="strand" evidence="12">
    <location>
        <begin position="190"/>
        <end position="203"/>
    </location>
</feature>
<feature type="strand" evidence="12">
    <location>
        <begin position="207"/>
        <end position="209"/>
    </location>
</feature>
<feature type="strand" evidence="12">
    <location>
        <begin position="211"/>
        <end position="215"/>
    </location>
</feature>
<feature type="strand" evidence="12">
    <location>
        <begin position="217"/>
        <end position="227"/>
    </location>
</feature>
<feature type="helix" evidence="12">
    <location>
        <begin position="240"/>
        <end position="253"/>
    </location>
</feature>
<feature type="helix" evidence="12">
    <location>
        <begin position="262"/>
        <end position="264"/>
    </location>
</feature>
<feature type="strand" evidence="12">
    <location>
        <begin position="266"/>
        <end position="274"/>
    </location>
</feature>
<feature type="strand" evidence="12">
    <location>
        <begin position="285"/>
        <end position="296"/>
    </location>
</feature>
<feature type="helix" evidence="12">
    <location>
        <begin position="298"/>
        <end position="315"/>
    </location>
</feature>
<feature type="strand" evidence="12">
    <location>
        <begin position="318"/>
        <end position="325"/>
    </location>
</feature>
<feature type="helix" evidence="12">
    <location>
        <begin position="326"/>
        <end position="328"/>
    </location>
</feature>
<feature type="strand" evidence="12">
    <location>
        <begin position="335"/>
        <end position="337"/>
    </location>
</feature>
<feature type="helix" evidence="12">
    <location>
        <begin position="339"/>
        <end position="353"/>
    </location>
</feature>
<feature type="helix" evidence="12">
    <location>
        <begin position="355"/>
        <end position="357"/>
    </location>
</feature>
<feature type="strand" evidence="12">
    <location>
        <begin position="358"/>
        <end position="360"/>
    </location>
</feature>
<feature type="helix" evidence="12">
    <location>
        <begin position="370"/>
        <end position="374"/>
    </location>
</feature>
<feature type="turn" evidence="13">
    <location>
        <begin position="375"/>
        <end position="378"/>
    </location>
</feature>
<feature type="strand" evidence="12">
    <location>
        <begin position="379"/>
        <end position="387"/>
    </location>
</feature>
<feature type="strand" evidence="13">
    <location>
        <begin position="396"/>
        <end position="398"/>
    </location>
</feature>
<feature type="helix" evidence="12">
    <location>
        <begin position="405"/>
        <end position="407"/>
    </location>
</feature>
<feature type="helix" evidence="12">
    <location>
        <begin position="408"/>
        <end position="427"/>
    </location>
</feature>
<accession>P54970</accession>
<accession>O49221</accession>